<reference key="1">
    <citation type="submission" date="2005-07" db="EMBL/GenBank/DDBJ databases">
        <title>Novel O-superfamily conotoxins, and their coding polynucleotides and use.</title>
        <authorList>
            <person name="Luo S."/>
            <person name="Zhangsun D."/>
            <person name="Zhang B."/>
            <person name="Lin Q."/>
        </authorList>
    </citation>
    <scope>NUCLEOTIDE SEQUENCE [MRNA]</scope>
    <source>
        <tissue>Venom duct</tissue>
    </source>
</reference>
<feature type="signal peptide" evidence="2">
    <location>
        <begin position="1"/>
        <end position="19"/>
    </location>
</feature>
<feature type="propeptide" id="PRO_0000414931" evidence="1">
    <location>
        <begin position="20"/>
        <end position="43"/>
    </location>
</feature>
<feature type="peptide" id="PRO_0000414932" description="Conotoxin CaHr91">
    <location>
        <begin position="44"/>
        <end position="77"/>
    </location>
</feature>
<feature type="disulfide bond" evidence="1">
    <location>
        <begin position="45"/>
        <end position="60"/>
    </location>
</feature>
<feature type="disulfide bond" evidence="1">
    <location>
        <begin position="52"/>
        <end position="65"/>
    </location>
</feature>
<feature type="disulfide bond" evidence="1">
    <location>
        <begin position="59"/>
        <end position="74"/>
    </location>
</feature>
<organism>
    <name type="scientific">Conus capitaneus</name>
    <name type="common">Captain cone</name>
    <dbReference type="NCBI Taxonomy" id="89439"/>
    <lineage>
        <taxon>Eukaryota</taxon>
        <taxon>Metazoa</taxon>
        <taxon>Spiralia</taxon>
        <taxon>Lophotrochozoa</taxon>
        <taxon>Mollusca</taxon>
        <taxon>Gastropoda</taxon>
        <taxon>Caenogastropoda</taxon>
        <taxon>Neogastropoda</taxon>
        <taxon>Conoidea</taxon>
        <taxon>Conidae</taxon>
        <taxon>Conus</taxon>
        <taxon>Rhizoconus</taxon>
    </lineage>
</organism>
<protein>
    <recommendedName>
        <fullName>Conotoxin CaHr91</fullName>
    </recommendedName>
</protein>
<name>O16H_CONCE</name>
<comment type="subcellular location">
    <subcellularLocation>
        <location evidence="1">Secreted</location>
    </subcellularLocation>
</comment>
<comment type="tissue specificity">
    <text>Expressed by the venom duct.</text>
</comment>
<comment type="domain">
    <text evidence="1">The presence of a 'disulfide through disulfide knot' structurally defines this protein as a knottin.</text>
</comment>
<comment type="domain">
    <text>The cysteine framework is VI/VII (C-C-CC-C-C).</text>
</comment>
<comment type="similarity">
    <text evidence="3">Belongs to the conotoxin O1 superfamily.</text>
</comment>
<proteinExistence type="evidence at transcript level"/>
<keyword id="KW-1015">Disulfide bond</keyword>
<keyword id="KW-0960">Knottin</keyword>
<keyword id="KW-0528">Neurotoxin</keyword>
<keyword id="KW-0964">Secreted</keyword>
<keyword id="KW-0732">Signal</keyword>
<keyword id="KW-0800">Toxin</keyword>
<accession>Q3YEE2</accession>
<evidence type="ECO:0000250" key="1"/>
<evidence type="ECO:0000255" key="2"/>
<evidence type="ECO:0000305" key="3"/>
<sequence>MKLTCALIITVLFLSITADDSRGKQGYRALKSIAGMLNSKTVRECREQSQGCTNTSPPCCSGLRCSGQSQGGVCISN</sequence>
<dbReference type="EMBL" id="DQ141171">
    <property type="protein sequence ID" value="AAZ83770.1"/>
    <property type="molecule type" value="mRNA"/>
</dbReference>
<dbReference type="SMR" id="Q3YEE2"/>
<dbReference type="ConoServer" id="1125">
    <property type="toxin name" value="CaHr91 precursor"/>
</dbReference>
<dbReference type="GO" id="GO:0005576">
    <property type="term" value="C:extracellular region"/>
    <property type="evidence" value="ECO:0007669"/>
    <property type="project" value="UniProtKB-SubCell"/>
</dbReference>
<dbReference type="GO" id="GO:0008200">
    <property type="term" value="F:ion channel inhibitor activity"/>
    <property type="evidence" value="ECO:0007669"/>
    <property type="project" value="InterPro"/>
</dbReference>
<dbReference type="GO" id="GO:0090729">
    <property type="term" value="F:toxin activity"/>
    <property type="evidence" value="ECO:0007669"/>
    <property type="project" value="UniProtKB-KW"/>
</dbReference>
<dbReference type="InterPro" id="IPR004214">
    <property type="entry name" value="Conotoxin"/>
</dbReference>
<dbReference type="Pfam" id="PF02950">
    <property type="entry name" value="Conotoxin"/>
    <property type="match status" value="1"/>
</dbReference>